<accession>P58358</accession>
<protein>
    <recommendedName>
        <fullName>Periplasmic protein TorT</fullName>
    </recommendedName>
</protein>
<evidence type="ECO:0000250" key="1"/>
<evidence type="ECO:0000305" key="2"/>
<proteinExistence type="inferred from homology"/>
<dbReference type="EMBL" id="AE005174">
    <property type="protein sequence ID" value="AAG55541.1"/>
    <property type="molecule type" value="Genomic_DNA"/>
</dbReference>
<dbReference type="EMBL" id="BA000007">
    <property type="protein sequence ID" value="BAB34572.1"/>
    <property type="molecule type" value="Genomic_DNA"/>
</dbReference>
<dbReference type="PIR" id="A85635">
    <property type="entry name" value="A85635"/>
</dbReference>
<dbReference type="PIR" id="E90772">
    <property type="entry name" value="E90772"/>
</dbReference>
<dbReference type="RefSeq" id="NP_309176.1">
    <property type="nucleotide sequence ID" value="NC_002695.1"/>
</dbReference>
<dbReference type="RefSeq" id="WP_001264927.1">
    <property type="nucleotide sequence ID" value="NZ_VOAI01000025.1"/>
</dbReference>
<dbReference type="SMR" id="P58358"/>
<dbReference type="STRING" id="155864.Z1411"/>
<dbReference type="GeneID" id="913730"/>
<dbReference type="KEGG" id="ece:Z1411"/>
<dbReference type="KEGG" id="ecs:ECs_1149"/>
<dbReference type="PATRIC" id="fig|386585.9.peg.1265"/>
<dbReference type="eggNOG" id="COG1879">
    <property type="taxonomic scope" value="Bacteria"/>
</dbReference>
<dbReference type="HOGENOM" id="CLU_053104_0_0_6"/>
<dbReference type="OMA" id="SEYRPTF"/>
<dbReference type="Proteomes" id="UP000000558">
    <property type="component" value="Chromosome"/>
</dbReference>
<dbReference type="Proteomes" id="UP000002519">
    <property type="component" value="Chromosome"/>
</dbReference>
<dbReference type="GO" id="GO:0042597">
    <property type="term" value="C:periplasmic space"/>
    <property type="evidence" value="ECO:0007669"/>
    <property type="project" value="UniProtKB-SubCell"/>
</dbReference>
<dbReference type="CDD" id="cd06306">
    <property type="entry name" value="PBP1_TorT-like"/>
    <property type="match status" value="1"/>
</dbReference>
<dbReference type="Gene3D" id="3.40.50.2300">
    <property type="match status" value="2"/>
</dbReference>
<dbReference type="InterPro" id="IPR001761">
    <property type="entry name" value="Peripla_BP/Lac1_sug-bd_dom"/>
</dbReference>
<dbReference type="InterPro" id="IPR028082">
    <property type="entry name" value="Peripla_BP_I"/>
</dbReference>
<dbReference type="InterPro" id="IPR014301">
    <property type="entry name" value="TMAO_TorT"/>
</dbReference>
<dbReference type="NCBIfam" id="NF008185">
    <property type="entry name" value="PRK10936.1"/>
    <property type="match status" value="1"/>
</dbReference>
<dbReference type="NCBIfam" id="TIGR02955">
    <property type="entry name" value="TMAO_TorT"/>
    <property type="match status" value="1"/>
</dbReference>
<dbReference type="PANTHER" id="PTHR46847">
    <property type="entry name" value="D-ALLOSE-BINDING PERIPLASMIC PROTEIN-RELATED"/>
    <property type="match status" value="1"/>
</dbReference>
<dbReference type="PANTHER" id="PTHR46847:SF1">
    <property type="entry name" value="D-ALLOSE-BINDING PERIPLASMIC PROTEIN-RELATED"/>
    <property type="match status" value="1"/>
</dbReference>
<dbReference type="Pfam" id="PF00532">
    <property type="entry name" value="Peripla_BP_1"/>
    <property type="match status" value="1"/>
</dbReference>
<dbReference type="SUPFAM" id="SSF53822">
    <property type="entry name" value="Periplasmic binding protein-like I"/>
    <property type="match status" value="1"/>
</dbReference>
<gene>
    <name type="primary">torT</name>
    <name type="ordered locus">Z1411</name>
    <name type="ordered locus">ECs1149</name>
</gene>
<name>TORT_ECO57</name>
<comment type="function">
    <text evidence="1">Upon binding a putative inducer it probably interacts with TorS and allows it to play a role in the induction of the torCAD operon for trimethylamine N-oxide reductase.</text>
</comment>
<comment type="subcellular location">
    <subcellularLocation>
        <location evidence="1">Periplasm</location>
    </subcellularLocation>
</comment>
<comment type="similarity">
    <text evidence="2">Belongs to the bacterial solute-binding protein 2 family.</text>
</comment>
<organism>
    <name type="scientific">Escherichia coli O157:H7</name>
    <dbReference type="NCBI Taxonomy" id="83334"/>
    <lineage>
        <taxon>Bacteria</taxon>
        <taxon>Pseudomonadati</taxon>
        <taxon>Pseudomonadota</taxon>
        <taxon>Gammaproteobacteria</taxon>
        <taxon>Enterobacterales</taxon>
        <taxon>Enterobacteriaceae</taxon>
        <taxon>Escherichia</taxon>
    </lineage>
</organism>
<keyword id="KW-0574">Periplasm</keyword>
<keyword id="KW-1185">Reference proteome</keyword>
<keyword id="KW-0732">Signal</keyword>
<keyword id="KW-0813">Transport</keyword>
<feature type="signal peptide" evidence="1">
    <location>
        <begin position="1"/>
        <end position="18"/>
    </location>
</feature>
<feature type="chain" id="PRO_0000031737" description="Periplasmic protein TorT">
    <location>
        <begin position="19"/>
        <end position="342"/>
    </location>
</feature>
<sequence>MRVLLFLLLSLFMLPAFSADNLLRWHDAQHFTVQASMPLKAKRVWKLCALYPSLKDSYWLSLNYGMQEAARRYGVDLKVLEAGGYSQLATQQAQIDQCKQWGAEAILLGSSTTSFPDLQKQVANLPVIELVNAIDAPQVKSRVGVPWFQMGYQPGRYLVQWAHGKPLNVLLMPGPDNAGGSKEMVEGFRAAIAGSPVRIVDIALGDNDIEIQRNLLQEMLERHPEIDVVAGTAIAAEAAMGEGRNLKTPLTVVSFYLSHQVYRGLKRGRVIMAASDQMVWQGELAVEQAIRQLQGQSVSDNVSPPILVLTPKNADREHIRRSLSPGGFRPVYFYQHTSAAKK</sequence>
<reference key="1">
    <citation type="journal article" date="2001" name="Nature">
        <title>Genome sequence of enterohaemorrhagic Escherichia coli O157:H7.</title>
        <authorList>
            <person name="Perna N.T."/>
            <person name="Plunkett G. III"/>
            <person name="Burland V."/>
            <person name="Mau B."/>
            <person name="Glasner J.D."/>
            <person name="Rose D.J."/>
            <person name="Mayhew G.F."/>
            <person name="Evans P.S."/>
            <person name="Gregor J."/>
            <person name="Kirkpatrick H.A."/>
            <person name="Posfai G."/>
            <person name="Hackett J."/>
            <person name="Klink S."/>
            <person name="Boutin A."/>
            <person name="Shao Y."/>
            <person name="Miller L."/>
            <person name="Grotbeck E.J."/>
            <person name="Davis N.W."/>
            <person name="Lim A."/>
            <person name="Dimalanta E.T."/>
            <person name="Potamousis K."/>
            <person name="Apodaca J."/>
            <person name="Anantharaman T.S."/>
            <person name="Lin J."/>
            <person name="Yen G."/>
            <person name="Schwartz D.C."/>
            <person name="Welch R.A."/>
            <person name="Blattner F.R."/>
        </authorList>
    </citation>
    <scope>NUCLEOTIDE SEQUENCE [LARGE SCALE GENOMIC DNA]</scope>
    <source>
        <strain>O157:H7 / EDL933 / ATCC 700927 / EHEC</strain>
    </source>
</reference>
<reference key="2">
    <citation type="journal article" date="2001" name="DNA Res.">
        <title>Complete genome sequence of enterohemorrhagic Escherichia coli O157:H7 and genomic comparison with a laboratory strain K-12.</title>
        <authorList>
            <person name="Hayashi T."/>
            <person name="Makino K."/>
            <person name="Ohnishi M."/>
            <person name="Kurokawa K."/>
            <person name="Ishii K."/>
            <person name="Yokoyama K."/>
            <person name="Han C.-G."/>
            <person name="Ohtsubo E."/>
            <person name="Nakayama K."/>
            <person name="Murata T."/>
            <person name="Tanaka M."/>
            <person name="Tobe T."/>
            <person name="Iida T."/>
            <person name="Takami H."/>
            <person name="Honda T."/>
            <person name="Sasakawa C."/>
            <person name="Ogasawara N."/>
            <person name="Yasunaga T."/>
            <person name="Kuhara S."/>
            <person name="Shiba T."/>
            <person name="Hattori M."/>
            <person name="Shinagawa H."/>
        </authorList>
    </citation>
    <scope>NUCLEOTIDE SEQUENCE [LARGE SCALE GENOMIC DNA]</scope>
    <source>
        <strain>O157:H7 / Sakai / RIMD 0509952 / EHEC</strain>
    </source>
</reference>